<proteinExistence type="evidence at protein level"/>
<organism evidence="6">
    <name type="scientific">Drosophila melanogaster</name>
    <name type="common">Fruit fly</name>
    <dbReference type="NCBI Taxonomy" id="7227"/>
    <lineage>
        <taxon>Eukaryota</taxon>
        <taxon>Metazoa</taxon>
        <taxon>Ecdysozoa</taxon>
        <taxon>Arthropoda</taxon>
        <taxon>Hexapoda</taxon>
        <taxon>Insecta</taxon>
        <taxon>Pterygota</taxon>
        <taxon>Neoptera</taxon>
        <taxon>Endopterygota</taxon>
        <taxon>Diptera</taxon>
        <taxon>Brachycera</taxon>
        <taxon>Muscomorpha</taxon>
        <taxon>Ephydroidea</taxon>
        <taxon>Drosophilidae</taxon>
        <taxon>Drosophila</taxon>
        <taxon>Sophophora</taxon>
    </lineage>
</organism>
<name>UQCC5_DROME</name>
<dbReference type="EMBL" id="AE014298">
    <property type="protein sequence ID" value="AAF46232.3"/>
    <property type="molecule type" value="Genomic_DNA"/>
</dbReference>
<dbReference type="EMBL" id="AE014298">
    <property type="protein sequence ID" value="AAF46233.2"/>
    <property type="molecule type" value="Genomic_DNA"/>
</dbReference>
<dbReference type="EMBL" id="AY113525">
    <property type="protein sequence ID" value="AAM29530.1"/>
    <property type="molecule type" value="mRNA"/>
</dbReference>
<dbReference type="RefSeq" id="NP_727152.1">
    <property type="nucleotide sequence ID" value="NM_167106.4"/>
</dbReference>
<dbReference type="RefSeq" id="NP_727153.2">
    <property type="nucleotide sequence ID" value="NM_167107.4"/>
</dbReference>
<dbReference type="SMR" id="Q9W3T5"/>
<dbReference type="FunCoup" id="Q9W3T5">
    <property type="interactions" value="137"/>
</dbReference>
<dbReference type="IntAct" id="Q9W3T5">
    <property type="interactions" value="1"/>
</dbReference>
<dbReference type="STRING" id="7227.FBpp0070967"/>
<dbReference type="PaxDb" id="7227-FBpp0070968"/>
<dbReference type="EnsemblMetazoa" id="FBtr0071007">
    <property type="protein sequence ID" value="FBpp0070967"/>
    <property type="gene ID" value="FBgn0052736"/>
</dbReference>
<dbReference type="EnsemblMetazoa" id="FBtr0071008">
    <property type="protein sequence ID" value="FBpp0070968"/>
    <property type="gene ID" value="FBgn0052736"/>
</dbReference>
<dbReference type="GeneID" id="50395"/>
<dbReference type="KEGG" id="dme:Dmel_CG32736"/>
<dbReference type="UCSC" id="CG32736-RA">
    <property type="organism name" value="d. melanogaster"/>
</dbReference>
<dbReference type="AGR" id="FB:FBgn0052736"/>
<dbReference type="CTD" id="50395"/>
<dbReference type="FlyBase" id="FBgn0052736">
    <property type="gene designation" value="sloth1"/>
</dbReference>
<dbReference type="VEuPathDB" id="VectorBase:FBgn0052736"/>
<dbReference type="eggNOG" id="ENOG502S80C">
    <property type="taxonomic scope" value="Eukaryota"/>
</dbReference>
<dbReference type="GeneTree" id="ENSGT00390000013390"/>
<dbReference type="HOGENOM" id="CLU_187276_0_0_1"/>
<dbReference type="InParanoid" id="Q9W3T5"/>
<dbReference type="OMA" id="MEWFMIK"/>
<dbReference type="OrthoDB" id="5913955at2759"/>
<dbReference type="PhylomeDB" id="Q9W3T5"/>
<dbReference type="BioGRID-ORCS" id="50395">
    <property type="hits" value="0 hits in 1 CRISPR screen"/>
</dbReference>
<dbReference type="GenomeRNAi" id="50395"/>
<dbReference type="PRO" id="PR:Q9W3T5"/>
<dbReference type="Proteomes" id="UP000000803">
    <property type="component" value="Chromosome X"/>
</dbReference>
<dbReference type="Bgee" id="FBgn0052736">
    <property type="expression patterns" value="Expressed in insect adult head and 12 other cell types or tissues"/>
</dbReference>
<dbReference type="GO" id="GO:0005743">
    <property type="term" value="C:mitochondrial inner membrane"/>
    <property type="evidence" value="ECO:0000255"/>
    <property type="project" value="FlyBase"/>
</dbReference>
<dbReference type="GO" id="GO:0005739">
    <property type="term" value="C:mitochondrion"/>
    <property type="evidence" value="ECO:0000314"/>
    <property type="project" value="FlyBase"/>
</dbReference>
<dbReference type="GO" id="GO:0044877">
    <property type="term" value="F:protein-containing complex binding"/>
    <property type="evidence" value="ECO:0000314"/>
    <property type="project" value="FlyBase"/>
</dbReference>
<dbReference type="GO" id="GO:0034551">
    <property type="term" value="P:mitochondrial respiratory chain complex III assembly"/>
    <property type="evidence" value="ECO:0000316"/>
    <property type="project" value="FlyBase"/>
</dbReference>
<dbReference type="InterPro" id="IPR028183">
    <property type="entry name" value="UQCC5"/>
</dbReference>
<dbReference type="PANTHER" id="PTHR35250">
    <property type="entry name" value="SMALL INTEGRAL MEMBRANE PROTEIN 4"/>
    <property type="match status" value="1"/>
</dbReference>
<dbReference type="PANTHER" id="PTHR35250:SF1">
    <property type="entry name" value="UBIQUINOL-CYTOCHROME-C REDUCTASE COMPLEX ASSEMBLY FACTOR 5"/>
    <property type="match status" value="1"/>
</dbReference>
<dbReference type="Pfam" id="PF15114">
    <property type="entry name" value="UPF0640"/>
    <property type="match status" value="1"/>
</dbReference>
<keyword id="KW-0472">Membrane</keyword>
<keyword id="KW-0496">Mitochondrion</keyword>
<keyword id="KW-0999">Mitochondrion inner membrane</keyword>
<keyword id="KW-1185">Reference proteome</keyword>
<keyword id="KW-0812">Transmembrane</keyword>
<keyword id="KW-1133">Transmembrane helix</keyword>
<feature type="chain" id="PRO_0000349245" description="Ubiquinol-cytochrome c reductase complex assembly factor 5">
    <location>
        <begin position="1"/>
        <end position="79"/>
    </location>
</feature>
<feature type="topological domain" description="Mitochondrial matrix" evidence="1">
    <location>
        <begin position="1"/>
        <end position="20"/>
    </location>
</feature>
<feature type="transmembrane region" description="Helical" evidence="2">
    <location>
        <begin position="21"/>
        <end position="43"/>
    </location>
</feature>
<feature type="topological domain" description="Mitochondrial intermembrane" evidence="1">
    <location>
        <begin position="44"/>
        <end position="79"/>
    </location>
</feature>
<evidence type="ECO:0000250" key="1">
    <source>
        <dbReference type="UniProtKB" id="Q8WVI0"/>
    </source>
</evidence>
<evidence type="ECO:0000255" key="2"/>
<evidence type="ECO:0000269" key="3">
    <source>
    </source>
</evidence>
<evidence type="ECO:0000305" key="4"/>
<evidence type="ECO:0000312" key="5">
    <source>
        <dbReference type="FlyBase" id="FBgn0052736"/>
    </source>
</evidence>
<evidence type="ECO:0000312" key="6">
    <source>
        <dbReference type="Proteomes" id="UP000000803"/>
    </source>
</evidence>
<reference key="1">
    <citation type="journal article" date="2000" name="Science">
        <title>The genome sequence of Drosophila melanogaster.</title>
        <authorList>
            <person name="Adams M.D."/>
            <person name="Celniker S.E."/>
            <person name="Holt R.A."/>
            <person name="Evans C.A."/>
            <person name="Gocayne J.D."/>
            <person name="Amanatides P.G."/>
            <person name="Scherer S.E."/>
            <person name="Li P.W."/>
            <person name="Hoskins R.A."/>
            <person name="Galle R.F."/>
            <person name="George R.A."/>
            <person name="Lewis S.E."/>
            <person name="Richards S."/>
            <person name="Ashburner M."/>
            <person name="Henderson S.N."/>
            <person name="Sutton G.G."/>
            <person name="Wortman J.R."/>
            <person name="Yandell M.D."/>
            <person name="Zhang Q."/>
            <person name="Chen L.X."/>
            <person name="Brandon R.C."/>
            <person name="Rogers Y.-H.C."/>
            <person name="Blazej R.G."/>
            <person name="Champe M."/>
            <person name="Pfeiffer B.D."/>
            <person name="Wan K.H."/>
            <person name="Doyle C."/>
            <person name="Baxter E.G."/>
            <person name="Helt G."/>
            <person name="Nelson C.R."/>
            <person name="Miklos G.L.G."/>
            <person name="Abril J.F."/>
            <person name="Agbayani A."/>
            <person name="An H.-J."/>
            <person name="Andrews-Pfannkoch C."/>
            <person name="Baldwin D."/>
            <person name="Ballew R.M."/>
            <person name="Basu A."/>
            <person name="Baxendale J."/>
            <person name="Bayraktaroglu L."/>
            <person name="Beasley E.M."/>
            <person name="Beeson K.Y."/>
            <person name="Benos P.V."/>
            <person name="Berman B.P."/>
            <person name="Bhandari D."/>
            <person name="Bolshakov S."/>
            <person name="Borkova D."/>
            <person name="Botchan M.R."/>
            <person name="Bouck J."/>
            <person name="Brokstein P."/>
            <person name="Brottier P."/>
            <person name="Burtis K.C."/>
            <person name="Busam D.A."/>
            <person name="Butler H."/>
            <person name="Cadieu E."/>
            <person name="Center A."/>
            <person name="Chandra I."/>
            <person name="Cherry J.M."/>
            <person name="Cawley S."/>
            <person name="Dahlke C."/>
            <person name="Davenport L.B."/>
            <person name="Davies P."/>
            <person name="de Pablos B."/>
            <person name="Delcher A."/>
            <person name="Deng Z."/>
            <person name="Mays A.D."/>
            <person name="Dew I."/>
            <person name="Dietz S.M."/>
            <person name="Dodson K."/>
            <person name="Doup L.E."/>
            <person name="Downes M."/>
            <person name="Dugan-Rocha S."/>
            <person name="Dunkov B.C."/>
            <person name="Dunn P."/>
            <person name="Durbin K.J."/>
            <person name="Evangelista C.C."/>
            <person name="Ferraz C."/>
            <person name="Ferriera S."/>
            <person name="Fleischmann W."/>
            <person name="Fosler C."/>
            <person name="Gabrielian A.E."/>
            <person name="Garg N.S."/>
            <person name="Gelbart W.M."/>
            <person name="Glasser K."/>
            <person name="Glodek A."/>
            <person name="Gong F."/>
            <person name="Gorrell J.H."/>
            <person name="Gu Z."/>
            <person name="Guan P."/>
            <person name="Harris M."/>
            <person name="Harris N.L."/>
            <person name="Harvey D.A."/>
            <person name="Heiman T.J."/>
            <person name="Hernandez J.R."/>
            <person name="Houck J."/>
            <person name="Hostin D."/>
            <person name="Houston K.A."/>
            <person name="Howland T.J."/>
            <person name="Wei M.-H."/>
            <person name="Ibegwam C."/>
            <person name="Jalali M."/>
            <person name="Kalush F."/>
            <person name="Karpen G.H."/>
            <person name="Ke Z."/>
            <person name="Kennison J.A."/>
            <person name="Ketchum K.A."/>
            <person name="Kimmel B.E."/>
            <person name="Kodira C.D."/>
            <person name="Kraft C.L."/>
            <person name="Kravitz S."/>
            <person name="Kulp D."/>
            <person name="Lai Z."/>
            <person name="Lasko P."/>
            <person name="Lei Y."/>
            <person name="Levitsky A.A."/>
            <person name="Li J.H."/>
            <person name="Li Z."/>
            <person name="Liang Y."/>
            <person name="Lin X."/>
            <person name="Liu X."/>
            <person name="Mattei B."/>
            <person name="McIntosh T.C."/>
            <person name="McLeod M.P."/>
            <person name="McPherson D."/>
            <person name="Merkulov G."/>
            <person name="Milshina N.V."/>
            <person name="Mobarry C."/>
            <person name="Morris J."/>
            <person name="Moshrefi A."/>
            <person name="Mount S.M."/>
            <person name="Moy M."/>
            <person name="Murphy B."/>
            <person name="Murphy L."/>
            <person name="Muzny D.M."/>
            <person name="Nelson D.L."/>
            <person name="Nelson D.R."/>
            <person name="Nelson K.A."/>
            <person name="Nixon K."/>
            <person name="Nusskern D.R."/>
            <person name="Pacleb J.M."/>
            <person name="Palazzolo M."/>
            <person name="Pittman G.S."/>
            <person name="Pan S."/>
            <person name="Pollard J."/>
            <person name="Puri V."/>
            <person name="Reese M.G."/>
            <person name="Reinert K."/>
            <person name="Remington K."/>
            <person name="Saunders R.D.C."/>
            <person name="Scheeler F."/>
            <person name="Shen H."/>
            <person name="Shue B.C."/>
            <person name="Siden-Kiamos I."/>
            <person name="Simpson M."/>
            <person name="Skupski M.P."/>
            <person name="Smith T.J."/>
            <person name="Spier E."/>
            <person name="Spradling A.C."/>
            <person name="Stapleton M."/>
            <person name="Strong R."/>
            <person name="Sun E."/>
            <person name="Svirskas R."/>
            <person name="Tector C."/>
            <person name="Turner R."/>
            <person name="Venter E."/>
            <person name="Wang A.H."/>
            <person name="Wang X."/>
            <person name="Wang Z.-Y."/>
            <person name="Wassarman D.A."/>
            <person name="Weinstock G.M."/>
            <person name="Weissenbach J."/>
            <person name="Williams S.M."/>
            <person name="Woodage T."/>
            <person name="Worley K.C."/>
            <person name="Wu D."/>
            <person name="Yang S."/>
            <person name="Yao Q.A."/>
            <person name="Ye J."/>
            <person name="Yeh R.-F."/>
            <person name="Zaveri J.S."/>
            <person name="Zhan M."/>
            <person name="Zhang G."/>
            <person name="Zhao Q."/>
            <person name="Zheng L."/>
            <person name="Zheng X.H."/>
            <person name="Zhong F.N."/>
            <person name="Zhong W."/>
            <person name="Zhou X."/>
            <person name="Zhu S.C."/>
            <person name="Zhu X."/>
            <person name="Smith H.O."/>
            <person name="Gibbs R.A."/>
            <person name="Myers E.W."/>
            <person name="Rubin G.M."/>
            <person name="Venter J.C."/>
        </authorList>
    </citation>
    <scope>NUCLEOTIDE SEQUENCE [LARGE SCALE GENOMIC DNA]</scope>
    <source>
        <strain>Berkeley</strain>
    </source>
</reference>
<reference key="2">
    <citation type="journal article" date="2002" name="Genome Biol.">
        <title>Annotation of the Drosophila melanogaster euchromatic genome: a systematic review.</title>
        <authorList>
            <person name="Misra S."/>
            <person name="Crosby M.A."/>
            <person name="Mungall C.J."/>
            <person name="Matthews B.B."/>
            <person name="Campbell K.S."/>
            <person name="Hradecky P."/>
            <person name="Huang Y."/>
            <person name="Kaminker J.S."/>
            <person name="Millburn G.H."/>
            <person name="Prochnik S.E."/>
            <person name="Smith C.D."/>
            <person name="Tupy J.L."/>
            <person name="Whitfield E.J."/>
            <person name="Bayraktaroglu L."/>
            <person name="Berman B.P."/>
            <person name="Bettencourt B.R."/>
            <person name="Celniker S.E."/>
            <person name="de Grey A.D.N.J."/>
            <person name="Drysdale R.A."/>
            <person name="Harris N.L."/>
            <person name="Richter J."/>
            <person name="Russo S."/>
            <person name="Schroeder A.J."/>
            <person name="Shu S.Q."/>
            <person name="Stapleton M."/>
            <person name="Yamada C."/>
            <person name="Ashburner M."/>
            <person name="Gelbart W.M."/>
            <person name="Rubin G.M."/>
            <person name="Lewis S.E."/>
        </authorList>
    </citation>
    <scope>GENOME REANNOTATION</scope>
    <source>
        <strain>Berkeley</strain>
    </source>
</reference>
<reference key="3">
    <citation type="journal article" date="2002" name="Genome Biol.">
        <title>A Drosophila full-length cDNA resource.</title>
        <authorList>
            <person name="Stapleton M."/>
            <person name="Carlson J.W."/>
            <person name="Brokstein P."/>
            <person name="Yu C."/>
            <person name="Champe M."/>
            <person name="George R.A."/>
            <person name="Guarin H."/>
            <person name="Kronmiller B."/>
            <person name="Pacleb J.M."/>
            <person name="Park S."/>
            <person name="Wan K.H."/>
            <person name="Rubin G.M."/>
            <person name="Celniker S.E."/>
        </authorList>
    </citation>
    <scope>NUCLEOTIDE SEQUENCE [LARGE SCALE MRNA]</scope>
    <source>
        <strain>Berkeley</strain>
        <tissue>Embryo</tissue>
    </source>
</reference>
<reference key="4">
    <citation type="journal article" date="2022" name="Elife">
        <title>Two neuronal peptides encoded from a single transcript regulate mitochondrial complex III in Drosophila.</title>
        <authorList>
            <person name="Bosch J.A."/>
            <person name="Ugur B."/>
            <person name="Pichardo-Casas I."/>
            <person name="Rabasco J."/>
            <person name="Escobedo F."/>
            <person name="Zuo Z."/>
            <person name="Brown B."/>
            <person name="Celniker S."/>
            <person name="Sinclair D.A."/>
            <person name="Bellen H.J."/>
            <person name="Perrimon N."/>
        </authorList>
    </citation>
    <scope>FUNCTION</scope>
    <scope>INTERACTION WITH SLOTH2; UQCC1 AND RFESP</scope>
    <scope>SUBCELLULAR LOCATION</scope>
    <scope>TISSUE SPECIFICITY</scope>
    <scope>DEVELOPMENTAL STAGE</scope>
    <scope>DISRUPTION PHENOTYPE</scope>
</reference>
<gene>
    <name evidence="5" type="primary">sloth1</name>
    <name evidence="5" type="ORF">CG32736</name>
</gene>
<sequence length="79" mass="9308">MSPYSGSVRRLLDSWPGKKRFGVYRFLPLFFLLGAGLEFSMINWTVGETNFYRTFKRRQAKNYVEEQQHLQARAANNTN</sequence>
<accession>Q9W3T5</accession>
<protein>
    <recommendedName>
        <fullName evidence="1">Ubiquinol-cytochrome c reductase complex assembly factor 5</fullName>
        <shortName evidence="4">UQCC5</shortName>
    </recommendedName>
    <alternativeName>
        <fullName evidence="4">Small integral membrane protein 4</fullName>
        <shortName evidence="4">SMIM4</shortName>
    </alternativeName>
</protein>
<comment type="function">
    <text evidence="3">Required for the assembly and stability of the mitochondrial ubiquinol-cytochrome c reductase complex (complex III (CIII) or cytochrome b-c1 complex), a multisubunit transmembrane complex that is part of the mitochondrial electron transport chain (ETC) which drives oxidative phosphorylation.</text>
</comment>
<comment type="subunit">
    <text evidence="3">Interacts with respiratory complex III components Uqcc1 and RFeSP; the interactions are probably involved in the assembly and stability of the mitochondrial ubiquinol-cytochrome c reductase complex (PubMed:36346220). Interacts with sloth2; the interaction stabilizes both components (PubMed:36346220).</text>
</comment>
<comment type="subcellular location">
    <subcellularLocation>
        <location evidence="1">Mitochondrion inner membrane</location>
        <topology evidence="2">Single-pass membrane protein</topology>
    </subcellularLocation>
    <subcellularLocation>
        <location evidence="3">Mitochondrion</location>
    </subcellularLocation>
</comment>
<comment type="tissue specificity">
    <text evidence="3">Expressed in the brain.</text>
</comment>
<comment type="developmental stage">
    <text evidence="3">In 3rd instar larvae, expressed in motor neurons at the neuromuscular junction and a subset of neuronal cells in the brain.</text>
</comment>
<comment type="disruption phenotype">
    <text evidence="3">Adult lethal, mainly due to flies becoming stuck in the food medium post eclosion (PubMed:36346220). Rare escaper adult flies have slow motor activity, reduced climbing ability and short scutellar bristles (PubMed:36346220). Larval motor neurons and adult photoreceptors have a reduced ability to maintain a synaptic response upon repeated stimulation (PubMed:36346220). Enhanced photoreceptor degeneration due to accumulation of ninaE/Rhodopsin-1 (PubMed:36346220). Impaired mitochondrial function in larvae (PubMed:36346220).</text>
</comment>
<comment type="miscellaneous">
    <text evidence="3">Expressed from one of two small open reading frames (smORFs) encoded by a bicistronic transcript. The ORF for sloth1 has a non-canonical Kozak sequence while the ORF for sloth2 has a classical optimal Kozak sequence. Both ORFs are expressed because ribosomes occasionally fail to initiate translation of sloth1 and continue scanning to initiate translation of sloth2, a process known as 'leaky scanning'.</text>
</comment>
<comment type="miscellaneous">
    <text evidence="4">The 'sloth' peptides were named for the slow movement phenotype of mutant flies.</text>
</comment>
<comment type="similarity">
    <text evidence="4">Belongs to the UQCC5 family.</text>
</comment>